<keyword id="KW-0025">Alternative splicing</keyword>
<keyword id="KW-0256">Endoplasmic reticulum</keyword>
<keyword id="KW-0325">Glycoprotein</keyword>
<keyword id="KW-0328">Glycosyltransferase</keyword>
<keyword id="KW-0472">Membrane</keyword>
<keyword id="KW-0492">Microsome</keyword>
<keyword id="KW-1185">Reference proteome</keyword>
<keyword id="KW-0732">Signal</keyword>
<keyword id="KW-0808">Transferase</keyword>
<keyword id="KW-0812">Transmembrane</keyword>
<keyword id="KW-1133">Transmembrane helix</keyword>
<name>UD12_MOUSE</name>
<reference key="1">
    <citation type="journal article" date="1995" name="Biochem. Genet.">
        <title>Isolation of cDNAs for mouse phenol and bilirubin UDP-glucuronosyltransferases and mapping of the mouse gene for phenol UDP-glucuronosyltransferase (Ugtla1) to chromosome 1 by restriction fragment length variations.</title>
        <authorList>
            <person name="Koiwai O."/>
            <person name="Hasada K."/>
            <person name="Yasui Y."/>
            <person name="Sakai Y."/>
            <person name="Sato H."/>
            <person name="Watanabe T."/>
        </authorList>
    </citation>
    <scope>NUCLEOTIDE SEQUENCE [MRNA]</scope>
    <source>
        <strain>BALB/cJ</strain>
        <tissue>Liver</tissue>
    </source>
</reference>
<reference key="2">
    <citation type="journal article" date="2004" name="Genome Res.">
        <title>Multiple variable first exons: a mechanism for cell- and tissue-specific gene regulation.</title>
        <authorList>
            <person name="Zhang T."/>
            <person name="Haws P."/>
            <person name="Wu Q."/>
        </authorList>
    </citation>
    <scope>NUCLEOTIDE SEQUENCE [MRNA]</scope>
    <scope>TISSUE SPECIFICITY</scope>
    <source>
        <tissue>Liver</tissue>
    </source>
</reference>
<reference key="3">
    <citation type="journal article" date="2005" name="Science">
        <title>The transcriptional landscape of the mammalian genome.</title>
        <authorList>
            <person name="Carninci P."/>
            <person name="Kasukawa T."/>
            <person name="Katayama S."/>
            <person name="Gough J."/>
            <person name="Frith M.C."/>
            <person name="Maeda N."/>
            <person name="Oyama R."/>
            <person name="Ravasi T."/>
            <person name="Lenhard B."/>
            <person name="Wells C."/>
            <person name="Kodzius R."/>
            <person name="Shimokawa K."/>
            <person name="Bajic V.B."/>
            <person name="Brenner S.E."/>
            <person name="Batalov S."/>
            <person name="Forrest A.R."/>
            <person name="Zavolan M."/>
            <person name="Davis M.J."/>
            <person name="Wilming L.G."/>
            <person name="Aidinis V."/>
            <person name="Allen J.E."/>
            <person name="Ambesi-Impiombato A."/>
            <person name="Apweiler R."/>
            <person name="Aturaliya R.N."/>
            <person name="Bailey T.L."/>
            <person name="Bansal M."/>
            <person name="Baxter L."/>
            <person name="Beisel K.W."/>
            <person name="Bersano T."/>
            <person name="Bono H."/>
            <person name="Chalk A.M."/>
            <person name="Chiu K.P."/>
            <person name="Choudhary V."/>
            <person name="Christoffels A."/>
            <person name="Clutterbuck D.R."/>
            <person name="Crowe M.L."/>
            <person name="Dalla E."/>
            <person name="Dalrymple B.P."/>
            <person name="de Bono B."/>
            <person name="Della Gatta G."/>
            <person name="di Bernardo D."/>
            <person name="Down T."/>
            <person name="Engstrom P."/>
            <person name="Fagiolini M."/>
            <person name="Faulkner G."/>
            <person name="Fletcher C.F."/>
            <person name="Fukushima T."/>
            <person name="Furuno M."/>
            <person name="Futaki S."/>
            <person name="Gariboldi M."/>
            <person name="Georgii-Hemming P."/>
            <person name="Gingeras T.R."/>
            <person name="Gojobori T."/>
            <person name="Green R.E."/>
            <person name="Gustincich S."/>
            <person name="Harbers M."/>
            <person name="Hayashi Y."/>
            <person name="Hensch T.K."/>
            <person name="Hirokawa N."/>
            <person name="Hill D."/>
            <person name="Huminiecki L."/>
            <person name="Iacono M."/>
            <person name="Ikeo K."/>
            <person name="Iwama A."/>
            <person name="Ishikawa T."/>
            <person name="Jakt M."/>
            <person name="Kanapin A."/>
            <person name="Katoh M."/>
            <person name="Kawasawa Y."/>
            <person name="Kelso J."/>
            <person name="Kitamura H."/>
            <person name="Kitano H."/>
            <person name="Kollias G."/>
            <person name="Krishnan S.P."/>
            <person name="Kruger A."/>
            <person name="Kummerfeld S.K."/>
            <person name="Kurochkin I.V."/>
            <person name="Lareau L.F."/>
            <person name="Lazarevic D."/>
            <person name="Lipovich L."/>
            <person name="Liu J."/>
            <person name="Liuni S."/>
            <person name="McWilliam S."/>
            <person name="Madan Babu M."/>
            <person name="Madera M."/>
            <person name="Marchionni L."/>
            <person name="Matsuda H."/>
            <person name="Matsuzawa S."/>
            <person name="Miki H."/>
            <person name="Mignone F."/>
            <person name="Miyake S."/>
            <person name="Morris K."/>
            <person name="Mottagui-Tabar S."/>
            <person name="Mulder N."/>
            <person name="Nakano N."/>
            <person name="Nakauchi H."/>
            <person name="Ng P."/>
            <person name="Nilsson R."/>
            <person name="Nishiguchi S."/>
            <person name="Nishikawa S."/>
            <person name="Nori F."/>
            <person name="Ohara O."/>
            <person name="Okazaki Y."/>
            <person name="Orlando V."/>
            <person name="Pang K.C."/>
            <person name="Pavan W.J."/>
            <person name="Pavesi G."/>
            <person name="Pesole G."/>
            <person name="Petrovsky N."/>
            <person name="Piazza S."/>
            <person name="Reed J."/>
            <person name="Reid J.F."/>
            <person name="Ring B.Z."/>
            <person name="Ringwald M."/>
            <person name="Rost B."/>
            <person name="Ruan Y."/>
            <person name="Salzberg S.L."/>
            <person name="Sandelin A."/>
            <person name="Schneider C."/>
            <person name="Schoenbach C."/>
            <person name="Sekiguchi K."/>
            <person name="Semple C.A."/>
            <person name="Seno S."/>
            <person name="Sessa L."/>
            <person name="Sheng Y."/>
            <person name="Shibata Y."/>
            <person name="Shimada H."/>
            <person name="Shimada K."/>
            <person name="Silva D."/>
            <person name="Sinclair B."/>
            <person name="Sperling S."/>
            <person name="Stupka E."/>
            <person name="Sugiura K."/>
            <person name="Sultana R."/>
            <person name="Takenaka Y."/>
            <person name="Taki K."/>
            <person name="Tammoja K."/>
            <person name="Tan S.L."/>
            <person name="Tang S."/>
            <person name="Taylor M.S."/>
            <person name="Tegner J."/>
            <person name="Teichmann S.A."/>
            <person name="Ueda H.R."/>
            <person name="van Nimwegen E."/>
            <person name="Verardo R."/>
            <person name="Wei C.L."/>
            <person name="Yagi K."/>
            <person name="Yamanishi H."/>
            <person name="Zabarovsky E."/>
            <person name="Zhu S."/>
            <person name="Zimmer A."/>
            <person name="Hide W."/>
            <person name="Bult C."/>
            <person name="Grimmond S.M."/>
            <person name="Teasdale R.D."/>
            <person name="Liu E.T."/>
            <person name="Brusic V."/>
            <person name="Quackenbush J."/>
            <person name="Wahlestedt C."/>
            <person name="Mattick J.S."/>
            <person name="Hume D.A."/>
            <person name="Kai C."/>
            <person name="Sasaki D."/>
            <person name="Tomaru Y."/>
            <person name="Fukuda S."/>
            <person name="Kanamori-Katayama M."/>
            <person name="Suzuki M."/>
            <person name="Aoki J."/>
            <person name="Arakawa T."/>
            <person name="Iida J."/>
            <person name="Imamura K."/>
            <person name="Itoh M."/>
            <person name="Kato T."/>
            <person name="Kawaji H."/>
            <person name="Kawagashira N."/>
            <person name="Kawashima T."/>
            <person name="Kojima M."/>
            <person name="Kondo S."/>
            <person name="Konno H."/>
            <person name="Nakano K."/>
            <person name="Ninomiya N."/>
            <person name="Nishio T."/>
            <person name="Okada M."/>
            <person name="Plessy C."/>
            <person name="Shibata K."/>
            <person name="Shiraki T."/>
            <person name="Suzuki S."/>
            <person name="Tagami M."/>
            <person name="Waki K."/>
            <person name="Watahiki A."/>
            <person name="Okamura-Oho Y."/>
            <person name="Suzuki H."/>
            <person name="Kawai J."/>
            <person name="Hayashizaki Y."/>
        </authorList>
    </citation>
    <scope>NUCLEOTIDE SEQUENCE [LARGE SCALE MRNA]</scope>
    <source>
        <strain>C57BL/6J</strain>
        <tissue>Kidney</tissue>
    </source>
</reference>
<reference key="4">
    <citation type="submission" date="2005-09" db="EMBL/GenBank/DDBJ databases">
        <authorList>
            <person name="Mural R.J."/>
            <person name="Adams M.D."/>
            <person name="Myers E.W."/>
            <person name="Smith H.O."/>
            <person name="Venter J.C."/>
        </authorList>
    </citation>
    <scope>NUCLEOTIDE SEQUENCE [LARGE SCALE GENOMIC DNA]</scope>
</reference>
<reference key="5">
    <citation type="journal article" date="2004" name="Genome Res.">
        <title>The status, quality, and expansion of the NIH full-length cDNA project: the Mammalian Gene Collection (MGC).</title>
        <authorList>
            <consortium name="The MGC Project Team"/>
        </authorList>
    </citation>
    <scope>NUCLEOTIDE SEQUENCE [LARGE SCALE MRNA]</scope>
</reference>
<reference key="6">
    <citation type="journal article" date="2010" name="Cell">
        <title>A tissue-specific atlas of mouse protein phosphorylation and expression.</title>
        <authorList>
            <person name="Huttlin E.L."/>
            <person name="Jedrychowski M.P."/>
            <person name="Elias J.E."/>
            <person name="Goswami T."/>
            <person name="Rad R."/>
            <person name="Beausoleil S.A."/>
            <person name="Villen J."/>
            <person name="Haas W."/>
            <person name="Sowa M.E."/>
            <person name="Gygi S.P."/>
        </authorList>
    </citation>
    <scope>IDENTIFICATION BY MASS SPECTROMETRY [LARGE SCALE ANALYSIS]</scope>
    <source>
        <tissue>Kidney</tissue>
    </source>
</reference>
<accession>P70691</accession>
<accession>Q545X2</accession>
<accession>Q6XL49</accession>
<protein>
    <recommendedName>
        <fullName>UDP-glucuronosyltransferase 1-2</fullName>
        <shortName>UDPGT 1-2</shortName>
        <shortName>UGT1*2</shortName>
        <shortName>UGT1-02</shortName>
        <shortName>UGT1.2</shortName>
        <ecNumber>2.4.1.17</ecNumber>
    </recommendedName>
    <alternativeName>
        <fullName>Bilirubin-specific UDPGT</fullName>
    </alternativeName>
    <alternativeName>
        <fullName>UDP-glucuronosyltransferase 1A2</fullName>
        <shortName>UGT1A2</shortName>
    </alternativeName>
</protein>
<sequence length="533" mass="60285">MDTGLCVPLRGISGLLLLLCALPWAEGAKVLVLPMEGSQWLSMRDVVRELHARGHQTVVLASEVTVHIKGEDFFTLKTYAFPYTKEEYQQEILSDIEKTFKTQHFVKAFFETTASIRNFFDLYSNSCIALLHNKMLIQQLNSSFFDVILTDPIFPCGAVLAKYLQIPAVFILRSLSCGIEYEATQCPNPSSYIPNLLTRLSDHMDFLQRVQNMLYYLVLKYICRLSITPYESLASELLQREVSLVEVLSHASVWLFRGDFVLDYPRPIMPNMVFIGGINCVTKKPLSQEFEAYVNASGEHGIVVFSLGSMVSEIPEKKAMEIAEALGRIPQTVLWRYTGTRPSNLAKNTILVKWLPQNDLLGHPKTRAFITHSGSHGIYEGICNGVPMVMMPLFGDQMDNAKRMETRGAGVTLNVLEMTADDLENALKTVINNKSYKENIMRLSSLHKDRPIEPLDLAVFWVEYVMRHKGAPHLRPAAHDLTWYQYHSLDVIGFLLAIVLTVVFIVFKCCAYGCRKCFGGKGRVKKSHKSKTH</sequence>
<dbReference type="EC" id="2.4.1.17"/>
<dbReference type="EMBL" id="D87866">
    <property type="protein sequence ID" value="BAA13482.1"/>
    <property type="molecule type" value="mRNA"/>
</dbReference>
<dbReference type="EMBL" id="AY227195">
    <property type="protein sequence ID" value="AAP48594.1"/>
    <property type="molecule type" value="mRNA"/>
</dbReference>
<dbReference type="EMBL" id="AK002629">
    <property type="protein sequence ID" value="BAB22243.1"/>
    <property type="molecule type" value="mRNA"/>
</dbReference>
<dbReference type="EMBL" id="CH466520">
    <property type="protein sequence ID" value="EDL40122.1"/>
    <property type="molecule type" value="Genomic_DNA"/>
</dbReference>
<dbReference type="EMBL" id="BC138676">
    <property type="protein sequence ID" value="AAI38677.1"/>
    <property type="molecule type" value="mRNA"/>
</dbReference>
<dbReference type="EMBL" id="BC145969">
    <property type="protein sequence ID" value="AAI45970.1"/>
    <property type="molecule type" value="mRNA"/>
</dbReference>
<dbReference type="CCDS" id="CCDS15141.1">
    <molecule id="P70691-1"/>
</dbReference>
<dbReference type="RefSeq" id="NP_038729.1">
    <molecule id="P70691-1"/>
    <property type="nucleotide sequence ID" value="NM_013701.3"/>
</dbReference>
<dbReference type="SMR" id="P70691"/>
<dbReference type="FunCoup" id="P70691">
    <property type="interactions" value="857"/>
</dbReference>
<dbReference type="STRING" id="10090.ENSMUSP00000037258"/>
<dbReference type="CAZy" id="GT1">
    <property type="family name" value="Glycosyltransferase Family 1"/>
</dbReference>
<dbReference type="GlyCosmos" id="P70691">
    <property type="glycosylation" value="3 sites, No reported glycans"/>
</dbReference>
<dbReference type="GlyGen" id="P70691">
    <property type="glycosylation" value="3 sites"/>
</dbReference>
<dbReference type="iPTMnet" id="P70691"/>
<dbReference type="PhosphoSitePlus" id="P70691"/>
<dbReference type="SwissPalm" id="P70691"/>
<dbReference type="jPOST" id="P70691"/>
<dbReference type="PaxDb" id="10090-ENSMUSP00000037258"/>
<dbReference type="PeptideAtlas" id="P70691"/>
<dbReference type="ProteomicsDB" id="298429">
    <molecule id="P70691-1"/>
</dbReference>
<dbReference type="Pumba" id="P70691"/>
<dbReference type="DNASU" id="22236"/>
<dbReference type="Ensembl" id="ENSMUST00000049289.9">
    <molecule id="P70691-1"/>
    <property type="protein sequence ID" value="ENSMUSP00000037258.9"/>
    <property type="gene ID" value="ENSMUSG00000090171.2"/>
</dbReference>
<dbReference type="GeneID" id="22236"/>
<dbReference type="KEGG" id="mmu:22236"/>
<dbReference type="UCSC" id="uc007byi.1">
    <molecule id="P70691-1"/>
    <property type="organism name" value="mouse"/>
</dbReference>
<dbReference type="AGR" id="MGI:3576049"/>
<dbReference type="CTD" id="22236"/>
<dbReference type="MGI" id="MGI:3576049">
    <property type="gene designation" value="Ugt1a2"/>
</dbReference>
<dbReference type="VEuPathDB" id="HostDB:ENSMUSG00000090171"/>
<dbReference type="eggNOG" id="KOG1192">
    <property type="taxonomic scope" value="Eukaryota"/>
</dbReference>
<dbReference type="GeneTree" id="ENSGT00940000162976"/>
<dbReference type="HOGENOM" id="CLU_012949_3_0_1"/>
<dbReference type="InParanoid" id="P70691"/>
<dbReference type="OMA" id="KYFCHIS"/>
<dbReference type="OrthoDB" id="42360at9989"/>
<dbReference type="PhylomeDB" id="P70691"/>
<dbReference type="TreeFam" id="TF315472"/>
<dbReference type="Reactome" id="R-MMU-156588">
    <property type="pathway name" value="Glucuronidation"/>
</dbReference>
<dbReference type="Reactome" id="R-MMU-189483">
    <property type="pathway name" value="Heme degradation"/>
</dbReference>
<dbReference type="Reactome" id="R-MMU-9749641">
    <property type="pathway name" value="Aspirin ADME"/>
</dbReference>
<dbReference type="Reactome" id="R-MMU-9754706">
    <property type="pathway name" value="Atorvastatin ADME"/>
</dbReference>
<dbReference type="Reactome" id="R-MMU-9757110">
    <property type="pathway name" value="Prednisone ADME"/>
</dbReference>
<dbReference type="BioGRID-ORCS" id="22236">
    <property type="hits" value="2 hits in 77 CRISPR screens"/>
</dbReference>
<dbReference type="PRO" id="PR:P70691"/>
<dbReference type="Proteomes" id="UP000000589">
    <property type="component" value="Chromosome 1"/>
</dbReference>
<dbReference type="RNAct" id="P70691">
    <property type="molecule type" value="protein"/>
</dbReference>
<dbReference type="Bgee" id="ENSMUSG00000090171">
    <property type="expression patterns" value="Expressed in right kidney and 19 other cell types or tissues"/>
</dbReference>
<dbReference type="GO" id="GO:0005789">
    <property type="term" value="C:endoplasmic reticulum membrane"/>
    <property type="evidence" value="ECO:0007669"/>
    <property type="project" value="UniProtKB-SubCell"/>
</dbReference>
<dbReference type="GO" id="GO:0015020">
    <property type="term" value="F:glucuronosyltransferase activity"/>
    <property type="evidence" value="ECO:0007669"/>
    <property type="project" value="UniProtKB-EC"/>
</dbReference>
<dbReference type="CDD" id="cd03784">
    <property type="entry name" value="GT1_Gtf-like"/>
    <property type="match status" value="1"/>
</dbReference>
<dbReference type="FunFam" id="3.40.50.2000:FF:000001">
    <property type="entry name" value="UDP-glucuronosyltransferase"/>
    <property type="match status" value="1"/>
</dbReference>
<dbReference type="FunFam" id="3.40.50.2000:FF:000066">
    <property type="entry name" value="UDP-glucuronosyltransferase 1-1"/>
    <property type="match status" value="1"/>
</dbReference>
<dbReference type="Gene3D" id="3.40.50.2000">
    <property type="entry name" value="Glycogen Phosphorylase B"/>
    <property type="match status" value="2"/>
</dbReference>
<dbReference type="InterPro" id="IPR050271">
    <property type="entry name" value="UDP-glycosyltransferase"/>
</dbReference>
<dbReference type="InterPro" id="IPR002213">
    <property type="entry name" value="UDP_glucos_trans"/>
</dbReference>
<dbReference type="InterPro" id="IPR035595">
    <property type="entry name" value="UDP_glycos_trans_CS"/>
</dbReference>
<dbReference type="PANTHER" id="PTHR48043">
    <property type="entry name" value="EG:EG0003.4 PROTEIN-RELATED"/>
    <property type="match status" value="1"/>
</dbReference>
<dbReference type="PANTHER" id="PTHR48043:SF161">
    <property type="entry name" value="UDP GLUCURONOSYLTRANSFERASE FAMILY 1 MEMBER A1"/>
    <property type="match status" value="1"/>
</dbReference>
<dbReference type="Pfam" id="PF00201">
    <property type="entry name" value="UDPGT"/>
    <property type="match status" value="1"/>
</dbReference>
<dbReference type="SUPFAM" id="SSF53756">
    <property type="entry name" value="UDP-Glycosyltransferase/glycogen phosphorylase"/>
    <property type="match status" value="1"/>
</dbReference>
<dbReference type="PROSITE" id="PS00375">
    <property type="entry name" value="UDPGT"/>
    <property type="match status" value="1"/>
</dbReference>
<organism>
    <name type="scientific">Mus musculus</name>
    <name type="common">Mouse</name>
    <dbReference type="NCBI Taxonomy" id="10090"/>
    <lineage>
        <taxon>Eukaryota</taxon>
        <taxon>Metazoa</taxon>
        <taxon>Chordata</taxon>
        <taxon>Craniata</taxon>
        <taxon>Vertebrata</taxon>
        <taxon>Euteleostomi</taxon>
        <taxon>Mammalia</taxon>
        <taxon>Eutheria</taxon>
        <taxon>Euarchontoglires</taxon>
        <taxon>Glires</taxon>
        <taxon>Rodentia</taxon>
        <taxon>Myomorpha</taxon>
        <taxon>Muroidea</taxon>
        <taxon>Muridae</taxon>
        <taxon>Murinae</taxon>
        <taxon>Mus</taxon>
        <taxon>Mus</taxon>
    </lineage>
</organism>
<comment type="function">
    <text>UDPGT is of major importance in the conjugation and subsequent elimination of potentially toxic xenobiotics and endogenous compounds.</text>
</comment>
<comment type="catalytic activity">
    <reaction>
        <text>glucuronate acceptor + UDP-alpha-D-glucuronate = acceptor beta-D-glucuronoside + UDP + H(+)</text>
        <dbReference type="Rhea" id="RHEA:21032"/>
        <dbReference type="ChEBI" id="CHEBI:15378"/>
        <dbReference type="ChEBI" id="CHEBI:58052"/>
        <dbReference type="ChEBI" id="CHEBI:58223"/>
        <dbReference type="ChEBI" id="CHEBI:132367"/>
        <dbReference type="ChEBI" id="CHEBI:132368"/>
        <dbReference type="EC" id="2.4.1.17"/>
    </reaction>
</comment>
<comment type="subcellular location">
    <subcellularLocation>
        <location evidence="1">Microsome</location>
    </subcellularLocation>
    <subcellularLocation>
        <location evidence="1">Endoplasmic reticulum membrane</location>
        <topology evidence="1">Single-pass membrane protein</topology>
    </subcellularLocation>
</comment>
<comment type="alternative products">
    <event type="alternative splicing"/>
    <isoform>
        <id>P70691-1</id>
        <name>1</name>
        <sequence type="displayed"/>
    </isoform>
    <text>A number of isoforms are produced. The different isozymes have a different N-terminal domain and a common C-terminal domain of 245 residues.</text>
</comment>
<comment type="tissue specificity">
    <text evidence="3">Expressed in kidney.</text>
</comment>
<comment type="similarity">
    <text evidence="4">Belongs to the UDP-glycosyltransferase family.</text>
</comment>
<evidence type="ECO:0000250" key="1"/>
<evidence type="ECO:0000255" key="2"/>
<evidence type="ECO:0000269" key="3">
    <source>
    </source>
</evidence>
<evidence type="ECO:0000305" key="4"/>
<gene>
    <name type="primary">Ugt1a2</name>
    <name type="synonym">Ugt1</name>
</gene>
<feature type="signal peptide" evidence="2">
    <location>
        <begin position="1"/>
        <end position="27"/>
    </location>
</feature>
<feature type="chain" id="PRO_0000036012" description="UDP-glucuronosyltransferase 1-2">
    <location>
        <begin position="28"/>
        <end position="533"/>
    </location>
</feature>
<feature type="transmembrane region" description="Helical" evidence="2">
    <location>
        <begin position="491"/>
        <end position="511"/>
    </location>
</feature>
<feature type="glycosylation site" description="N-linked (GlcNAc...) asparagine" evidence="2">
    <location>
        <position position="141"/>
    </location>
</feature>
<feature type="glycosylation site" description="N-linked (GlcNAc...) asparagine" evidence="2">
    <location>
        <position position="295"/>
    </location>
</feature>
<feature type="glycosylation site" description="N-linked (GlcNAc...) asparagine" evidence="2">
    <location>
        <position position="433"/>
    </location>
</feature>
<feature type="sequence conflict" description="In Ref. 2; AAP48594." evidence="4" ref="2">
    <original>S</original>
    <variation>G</variation>
    <location>
        <position position="143"/>
    </location>
</feature>
<proteinExistence type="evidence at protein level"/>